<reference key="1">
    <citation type="journal article" date="2004" name="Nat. Biotechnol.">
        <title>The genome sequence of the anaerobic, sulfate-reducing bacterium Desulfovibrio vulgaris Hildenborough.</title>
        <authorList>
            <person name="Heidelberg J.F."/>
            <person name="Seshadri R."/>
            <person name="Haveman S.A."/>
            <person name="Hemme C.L."/>
            <person name="Paulsen I.T."/>
            <person name="Kolonay J.F."/>
            <person name="Eisen J.A."/>
            <person name="Ward N.L."/>
            <person name="Methe B.A."/>
            <person name="Brinkac L.M."/>
            <person name="Daugherty S.C."/>
            <person name="DeBoy R.T."/>
            <person name="Dodson R.J."/>
            <person name="Durkin A.S."/>
            <person name="Madupu R."/>
            <person name="Nelson W.C."/>
            <person name="Sullivan S.A."/>
            <person name="Fouts D.E."/>
            <person name="Haft D.H."/>
            <person name="Selengut J."/>
            <person name="Peterson J.D."/>
            <person name="Davidsen T.M."/>
            <person name="Zafar N."/>
            <person name="Zhou L."/>
            <person name="Radune D."/>
            <person name="Dimitrov G."/>
            <person name="Hance M."/>
            <person name="Tran K."/>
            <person name="Khouri H.M."/>
            <person name="Gill J."/>
            <person name="Utterback T.R."/>
            <person name="Feldblyum T.V."/>
            <person name="Wall J.D."/>
            <person name="Voordouw G."/>
            <person name="Fraser C.M."/>
        </authorList>
    </citation>
    <scope>NUCLEOTIDE SEQUENCE [LARGE SCALE GENOMIC DNA]</scope>
    <source>
        <strain>ATCC 29579 / DSM 644 / CCUG 34227 / NCIMB 8303 / VKM B-1760 / Hildenborough</strain>
    </source>
</reference>
<accession>Q72CF3</accession>
<proteinExistence type="inferred from homology"/>
<organism>
    <name type="scientific">Nitratidesulfovibrio vulgaris (strain ATCC 29579 / DSM 644 / CCUG 34227 / NCIMB 8303 / VKM B-1760 / Hildenborough)</name>
    <name type="common">Desulfovibrio vulgaris</name>
    <dbReference type="NCBI Taxonomy" id="882"/>
    <lineage>
        <taxon>Bacteria</taxon>
        <taxon>Pseudomonadati</taxon>
        <taxon>Thermodesulfobacteriota</taxon>
        <taxon>Desulfovibrionia</taxon>
        <taxon>Desulfovibrionales</taxon>
        <taxon>Desulfovibrionaceae</taxon>
        <taxon>Nitratidesulfovibrio</taxon>
    </lineage>
</organism>
<evidence type="ECO:0000255" key="1">
    <source>
        <dbReference type="HAMAP-Rule" id="MF_01368"/>
    </source>
</evidence>
<evidence type="ECO:0000305" key="2"/>
<comment type="subunit">
    <text evidence="1">Part of the 50S ribosomal subunit. Contacts protein L32.</text>
</comment>
<comment type="similarity">
    <text evidence="1">Belongs to the bacterial ribosomal protein bL17 family.</text>
</comment>
<keyword id="KW-1185">Reference proteome</keyword>
<keyword id="KW-0687">Ribonucleoprotein</keyword>
<keyword id="KW-0689">Ribosomal protein</keyword>
<feature type="chain" id="PRO_0000267868" description="Large ribosomal subunit protein bL17">
    <location>
        <begin position="1"/>
        <end position="133"/>
    </location>
</feature>
<name>RL17_NITV2</name>
<gene>
    <name evidence="1" type="primary">rplQ</name>
    <name type="ordered locus">DVU_1330</name>
</gene>
<sequence>MRHSNSGKKLGRTPSHRKALFRNLAKALLTHGKIRTTEIKAKELRRVVEPLITLALRNDLHARRQAYSVLGSHQLVKRLFDEIGPAFVGVPGGYTRVVKLGQPRRGDCAPLAIIEFTRTVAASEAAAAPAEAE</sequence>
<dbReference type="EMBL" id="AE017285">
    <property type="protein sequence ID" value="AAS95808.1"/>
    <property type="molecule type" value="Genomic_DNA"/>
</dbReference>
<dbReference type="RefSeq" id="WP_010938625.1">
    <property type="nucleotide sequence ID" value="NC_002937.3"/>
</dbReference>
<dbReference type="RefSeq" id="YP_010549.1">
    <property type="nucleotide sequence ID" value="NC_002937.3"/>
</dbReference>
<dbReference type="SMR" id="Q72CF3"/>
<dbReference type="STRING" id="882.DVU_1330"/>
<dbReference type="PaxDb" id="882-DVU_1330"/>
<dbReference type="EnsemblBacteria" id="AAS95808">
    <property type="protein sequence ID" value="AAS95808"/>
    <property type="gene ID" value="DVU_1330"/>
</dbReference>
<dbReference type="KEGG" id="dvu:DVU_1330"/>
<dbReference type="PATRIC" id="fig|882.5.peg.1242"/>
<dbReference type="eggNOG" id="COG0203">
    <property type="taxonomic scope" value="Bacteria"/>
</dbReference>
<dbReference type="HOGENOM" id="CLU_074407_2_0_7"/>
<dbReference type="OrthoDB" id="9809073at2"/>
<dbReference type="PhylomeDB" id="Q72CF3"/>
<dbReference type="Proteomes" id="UP000002194">
    <property type="component" value="Chromosome"/>
</dbReference>
<dbReference type="GO" id="GO:0022625">
    <property type="term" value="C:cytosolic large ribosomal subunit"/>
    <property type="evidence" value="ECO:0007669"/>
    <property type="project" value="TreeGrafter"/>
</dbReference>
<dbReference type="GO" id="GO:0003735">
    <property type="term" value="F:structural constituent of ribosome"/>
    <property type="evidence" value="ECO:0007669"/>
    <property type="project" value="InterPro"/>
</dbReference>
<dbReference type="GO" id="GO:0006412">
    <property type="term" value="P:translation"/>
    <property type="evidence" value="ECO:0007669"/>
    <property type="project" value="UniProtKB-UniRule"/>
</dbReference>
<dbReference type="FunFam" id="3.90.1030.10:FF:000001">
    <property type="entry name" value="50S ribosomal protein L17"/>
    <property type="match status" value="1"/>
</dbReference>
<dbReference type="Gene3D" id="3.90.1030.10">
    <property type="entry name" value="Ribosomal protein L17"/>
    <property type="match status" value="1"/>
</dbReference>
<dbReference type="HAMAP" id="MF_01368">
    <property type="entry name" value="Ribosomal_bL17"/>
    <property type="match status" value="1"/>
</dbReference>
<dbReference type="InterPro" id="IPR000456">
    <property type="entry name" value="Ribosomal_bL17"/>
</dbReference>
<dbReference type="InterPro" id="IPR036373">
    <property type="entry name" value="Ribosomal_bL17_sf"/>
</dbReference>
<dbReference type="NCBIfam" id="TIGR00059">
    <property type="entry name" value="L17"/>
    <property type="match status" value="1"/>
</dbReference>
<dbReference type="PANTHER" id="PTHR14413:SF16">
    <property type="entry name" value="LARGE RIBOSOMAL SUBUNIT PROTEIN BL17M"/>
    <property type="match status" value="1"/>
</dbReference>
<dbReference type="PANTHER" id="PTHR14413">
    <property type="entry name" value="RIBOSOMAL PROTEIN L17"/>
    <property type="match status" value="1"/>
</dbReference>
<dbReference type="Pfam" id="PF01196">
    <property type="entry name" value="Ribosomal_L17"/>
    <property type="match status" value="1"/>
</dbReference>
<dbReference type="SUPFAM" id="SSF64263">
    <property type="entry name" value="Prokaryotic ribosomal protein L17"/>
    <property type="match status" value="1"/>
</dbReference>
<protein>
    <recommendedName>
        <fullName evidence="1">Large ribosomal subunit protein bL17</fullName>
    </recommendedName>
    <alternativeName>
        <fullName evidence="2">50S ribosomal protein L17</fullName>
    </alternativeName>
</protein>